<accession>B1LK44</accession>
<reference key="1">
    <citation type="journal article" date="2008" name="J. Bacteriol.">
        <title>Insights into the environmental resistance gene pool from the genome sequence of the multidrug-resistant environmental isolate Escherichia coli SMS-3-5.</title>
        <authorList>
            <person name="Fricke W.F."/>
            <person name="Wright M.S."/>
            <person name="Lindell A.H."/>
            <person name="Harkins D.M."/>
            <person name="Baker-Austin C."/>
            <person name="Ravel J."/>
            <person name="Stepanauskas R."/>
        </authorList>
    </citation>
    <scope>NUCLEOTIDE SEQUENCE [LARGE SCALE GENOMIC DNA]</scope>
    <source>
        <strain>SMS-3-5 / SECEC</strain>
    </source>
</reference>
<keyword id="KW-0997">Cell inner membrane</keyword>
<keyword id="KW-1003">Cell membrane</keyword>
<keyword id="KW-0285">Flavoprotein</keyword>
<keyword id="KW-0288">FMN</keyword>
<keyword id="KW-0472">Membrane</keyword>
<keyword id="KW-0560">Oxidoreductase</keyword>
<evidence type="ECO:0000255" key="1">
    <source>
        <dbReference type="HAMAP-Rule" id="MF_01559"/>
    </source>
</evidence>
<organism>
    <name type="scientific">Escherichia coli (strain SMS-3-5 / SECEC)</name>
    <dbReference type="NCBI Taxonomy" id="439855"/>
    <lineage>
        <taxon>Bacteria</taxon>
        <taxon>Pseudomonadati</taxon>
        <taxon>Pseudomonadota</taxon>
        <taxon>Gammaproteobacteria</taxon>
        <taxon>Enterobacterales</taxon>
        <taxon>Enterobacteriaceae</taxon>
        <taxon>Escherichia</taxon>
    </lineage>
</organism>
<sequence length="396" mass="42730">MIISAASDYRAAAQRILPPFLFHYMDGGAYSEYTLRRNVEDLSEVALRQRILKNMSDLSLETTLFNEKLSMPVALAPVGLCGMYARRGEVQAAKAADAHGIPFTLSTVSVCPIEEVAPAIKRPMWFQLYVLRDRGFMRNALERAKAAGCSTLVFTVDMPTPGARYRDAHSGMSGPNAAMRRYLQAVTHPQWAWDVGLNGRPHDLGNISAYLGKPTGLEDYIGWLGNNFDPSISWKDLEWIRDFWDGPMVIKGILDPEDARDAVRFGADGIVVSNHGGRQLDGVLSSARALPAIADAVKGDIAILADSGIRNGLDVVRMIALGADTVLLGRAFLYALATAGQAGVANLLNLIEKEMKVAMTLTGAKSISEITQDSLVQELSKAPAAALAPMAKGNAA</sequence>
<feature type="chain" id="PRO_0000383423" description="L-lactate dehydrogenase">
    <location>
        <begin position="1"/>
        <end position="396"/>
    </location>
</feature>
<feature type="domain" description="FMN hydroxy acid dehydrogenase" evidence="1">
    <location>
        <begin position="1"/>
        <end position="380"/>
    </location>
</feature>
<feature type="active site" description="Proton acceptor" evidence="1">
    <location>
        <position position="275"/>
    </location>
</feature>
<feature type="binding site" evidence="1">
    <location>
        <position position="24"/>
    </location>
    <ligand>
        <name>substrate</name>
    </ligand>
</feature>
<feature type="binding site" evidence="1">
    <location>
        <position position="106"/>
    </location>
    <ligand>
        <name>FMN</name>
        <dbReference type="ChEBI" id="CHEBI:58210"/>
    </ligand>
</feature>
<feature type="binding site" evidence="1">
    <location>
        <position position="127"/>
    </location>
    <ligand>
        <name>FMN</name>
        <dbReference type="ChEBI" id="CHEBI:58210"/>
    </ligand>
</feature>
<feature type="binding site" evidence="1">
    <location>
        <position position="129"/>
    </location>
    <ligand>
        <name>substrate</name>
    </ligand>
</feature>
<feature type="binding site" evidence="1">
    <location>
        <position position="155"/>
    </location>
    <ligand>
        <name>FMN</name>
        <dbReference type="ChEBI" id="CHEBI:58210"/>
    </ligand>
</feature>
<feature type="binding site" evidence="1">
    <location>
        <position position="164"/>
    </location>
    <ligand>
        <name>substrate</name>
    </ligand>
</feature>
<feature type="binding site" evidence="1">
    <location>
        <position position="251"/>
    </location>
    <ligand>
        <name>FMN</name>
        <dbReference type="ChEBI" id="CHEBI:58210"/>
    </ligand>
</feature>
<feature type="binding site" evidence="1">
    <location>
        <position position="278"/>
    </location>
    <ligand>
        <name>substrate</name>
    </ligand>
</feature>
<feature type="binding site" evidence="1">
    <location>
        <begin position="306"/>
        <end position="330"/>
    </location>
    <ligand>
        <name>FMN</name>
        <dbReference type="ChEBI" id="CHEBI:58210"/>
    </ligand>
</feature>
<protein>
    <recommendedName>
        <fullName evidence="1">L-lactate dehydrogenase</fullName>
        <ecNumber evidence="1">1.1.-.-</ecNumber>
    </recommendedName>
</protein>
<proteinExistence type="inferred from homology"/>
<name>LLDD_ECOSM</name>
<gene>
    <name evidence="1" type="primary">lldD</name>
    <name type="ordered locus">EcSMS35_3942</name>
</gene>
<dbReference type="EC" id="1.1.-.-" evidence="1"/>
<dbReference type="EMBL" id="CP000970">
    <property type="protein sequence ID" value="ACB15827.1"/>
    <property type="molecule type" value="Genomic_DNA"/>
</dbReference>
<dbReference type="RefSeq" id="WP_000586958.1">
    <property type="nucleotide sequence ID" value="NC_010498.1"/>
</dbReference>
<dbReference type="SMR" id="B1LK44"/>
<dbReference type="KEGG" id="ecm:EcSMS35_3942"/>
<dbReference type="HOGENOM" id="CLU_020639_0_0_6"/>
<dbReference type="Proteomes" id="UP000007011">
    <property type="component" value="Chromosome"/>
</dbReference>
<dbReference type="GO" id="GO:0005886">
    <property type="term" value="C:plasma membrane"/>
    <property type="evidence" value="ECO:0007669"/>
    <property type="project" value="UniProtKB-SubCell"/>
</dbReference>
<dbReference type="GO" id="GO:0010181">
    <property type="term" value="F:FMN binding"/>
    <property type="evidence" value="ECO:0007669"/>
    <property type="project" value="InterPro"/>
</dbReference>
<dbReference type="GO" id="GO:0004459">
    <property type="term" value="F:L-lactate dehydrogenase activity"/>
    <property type="evidence" value="ECO:0007669"/>
    <property type="project" value="UniProtKB-UniRule"/>
</dbReference>
<dbReference type="GO" id="GO:0009060">
    <property type="term" value="P:aerobic respiration"/>
    <property type="evidence" value="ECO:0007669"/>
    <property type="project" value="TreeGrafter"/>
</dbReference>
<dbReference type="GO" id="GO:0006089">
    <property type="term" value="P:lactate metabolic process"/>
    <property type="evidence" value="ECO:0007669"/>
    <property type="project" value="UniProtKB-UniRule"/>
</dbReference>
<dbReference type="CDD" id="cd02809">
    <property type="entry name" value="alpha_hydroxyacid_oxid_FMN"/>
    <property type="match status" value="1"/>
</dbReference>
<dbReference type="FunFam" id="3.20.20.70:FF:000029">
    <property type="entry name" value="L-lactate dehydrogenase"/>
    <property type="match status" value="1"/>
</dbReference>
<dbReference type="Gene3D" id="3.20.20.70">
    <property type="entry name" value="Aldolase class I"/>
    <property type="match status" value="1"/>
</dbReference>
<dbReference type="HAMAP" id="MF_01559">
    <property type="entry name" value="L_lact_dehydr"/>
    <property type="match status" value="1"/>
</dbReference>
<dbReference type="InterPro" id="IPR013785">
    <property type="entry name" value="Aldolase_TIM"/>
</dbReference>
<dbReference type="InterPro" id="IPR012133">
    <property type="entry name" value="Alpha-hydoxy_acid_DH_FMN"/>
</dbReference>
<dbReference type="InterPro" id="IPR000262">
    <property type="entry name" value="FMN-dep_DH"/>
</dbReference>
<dbReference type="InterPro" id="IPR037396">
    <property type="entry name" value="FMN_HAD"/>
</dbReference>
<dbReference type="InterPro" id="IPR008259">
    <property type="entry name" value="FMN_hydac_DH_AS"/>
</dbReference>
<dbReference type="InterPro" id="IPR020920">
    <property type="entry name" value="LldD"/>
</dbReference>
<dbReference type="NCBIfam" id="NF033901">
    <property type="entry name" value="L_lactate_LldD"/>
    <property type="match status" value="1"/>
</dbReference>
<dbReference type="NCBIfam" id="NF008398">
    <property type="entry name" value="PRK11197.1"/>
    <property type="match status" value="1"/>
</dbReference>
<dbReference type="PANTHER" id="PTHR10578:SF85">
    <property type="entry name" value="L-LACTATE DEHYDROGENASE"/>
    <property type="match status" value="1"/>
</dbReference>
<dbReference type="PANTHER" id="PTHR10578">
    <property type="entry name" value="S -2-HYDROXY-ACID OXIDASE-RELATED"/>
    <property type="match status" value="1"/>
</dbReference>
<dbReference type="Pfam" id="PF01070">
    <property type="entry name" value="FMN_dh"/>
    <property type="match status" value="1"/>
</dbReference>
<dbReference type="PIRSF" id="PIRSF000138">
    <property type="entry name" value="Al-hdrx_acd_dh"/>
    <property type="match status" value="1"/>
</dbReference>
<dbReference type="SUPFAM" id="SSF51395">
    <property type="entry name" value="FMN-linked oxidoreductases"/>
    <property type="match status" value="1"/>
</dbReference>
<dbReference type="PROSITE" id="PS00557">
    <property type="entry name" value="FMN_HYDROXY_ACID_DH_1"/>
    <property type="match status" value="1"/>
</dbReference>
<dbReference type="PROSITE" id="PS51349">
    <property type="entry name" value="FMN_HYDROXY_ACID_DH_2"/>
    <property type="match status" value="1"/>
</dbReference>
<comment type="function">
    <text evidence="1">Catalyzes the conversion of L-lactate to pyruvate. Is coupled to the respiratory chain.</text>
</comment>
<comment type="catalytic activity">
    <reaction evidence="1">
        <text>(S)-lactate + A = pyruvate + AH2</text>
        <dbReference type="Rhea" id="RHEA:45816"/>
        <dbReference type="ChEBI" id="CHEBI:13193"/>
        <dbReference type="ChEBI" id="CHEBI:15361"/>
        <dbReference type="ChEBI" id="CHEBI:16651"/>
        <dbReference type="ChEBI" id="CHEBI:17499"/>
    </reaction>
</comment>
<comment type="cofactor">
    <cofactor evidence="1">
        <name>FMN</name>
        <dbReference type="ChEBI" id="CHEBI:58210"/>
    </cofactor>
</comment>
<comment type="subcellular location">
    <subcellularLocation>
        <location evidence="1">Cell inner membrane</location>
        <topology evidence="1">Peripheral membrane protein</topology>
    </subcellularLocation>
</comment>
<comment type="similarity">
    <text evidence="1">Belongs to the FMN-dependent alpha-hydroxy acid dehydrogenase family.</text>
</comment>